<organism>
    <name type="scientific">Mus musculus</name>
    <name type="common">Mouse</name>
    <dbReference type="NCBI Taxonomy" id="10090"/>
    <lineage>
        <taxon>Eukaryota</taxon>
        <taxon>Metazoa</taxon>
        <taxon>Chordata</taxon>
        <taxon>Craniata</taxon>
        <taxon>Vertebrata</taxon>
        <taxon>Euteleostomi</taxon>
        <taxon>Mammalia</taxon>
        <taxon>Eutheria</taxon>
        <taxon>Euarchontoglires</taxon>
        <taxon>Glires</taxon>
        <taxon>Rodentia</taxon>
        <taxon>Myomorpha</taxon>
        <taxon>Muroidea</taxon>
        <taxon>Muridae</taxon>
        <taxon>Murinae</taxon>
        <taxon>Mus</taxon>
        <taxon>Mus</taxon>
    </lineage>
</organism>
<keyword id="KW-0968">Cytoplasmic vesicle</keyword>
<keyword id="KW-0967">Endosome</keyword>
<keyword id="KW-0333">Golgi apparatus</keyword>
<keyword id="KW-0342">GTP-binding</keyword>
<keyword id="KW-0378">Hydrolase</keyword>
<keyword id="KW-0449">Lipoprotein</keyword>
<keyword id="KW-0460">Magnesium</keyword>
<keyword id="KW-0472">Membrane</keyword>
<keyword id="KW-0479">Metal-binding</keyword>
<keyword id="KW-0547">Nucleotide-binding</keyword>
<keyword id="KW-0597">Phosphoprotein</keyword>
<keyword id="KW-0636">Prenylation</keyword>
<keyword id="KW-1185">Reference proteome</keyword>
<sequence length="195" mass="21463">MMAIRELKVCLLGDTGVGKSSIVCRFVQDHFDHNISPTIGASFMTKTVPCGNELHKFLIWDTAGQERFHSLAPMYYRGSAAAVIVYDITKQDSFHTLKKWVKELKEHGPENIVMAIAGNKCDLSDIREVPLKDAKEYAESIGAIVVETSAKNAINIEELFQGISRQIPPLGPQENGNSGGIKLGNQSLQASRRCC</sequence>
<accession>Q921E2</accession>
<accession>Q8BKP0</accession>
<comment type="function">
    <text evidence="1 5 7">The small GTPases Rab are key regulators of intracellular membrane trafficking, from the formation of transport vesicles to their fusion with membranes. Rabs cycle between an inactive GDP-bound form and an active GTP-bound form that is able to recruit to membranes different set of downstream effectors directly responsible for vesicle formation, movement, tethering and fusion. Required for the integrity and for normal function of the Golgi apparatus and the trans-Golgi network. Plays a role in insulin-stimulated translocation of GLUT4 to the cell membrane. Plays a role in the maturation of phagosomes that engulf pathogens, such as S.aureus and Mycobacterium (By similarity). Plays a role in M6PR transport from the trans-Golgi network to endosomes. Plays a role in the internalization of EGFR from the cell membrane into endosomes.</text>
</comment>
<comment type="catalytic activity">
    <reaction evidence="3">
        <text>GTP + H2O = GDP + phosphate + H(+)</text>
        <dbReference type="Rhea" id="RHEA:19669"/>
        <dbReference type="ChEBI" id="CHEBI:15377"/>
        <dbReference type="ChEBI" id="CHEBI:15378"/>
        <dbReference type="ChEBI" id="CHEBI:37565"/>
        <dbReference type="ChEBI" id="CHEBI:43474"/>
        <dbReference type="ChEBI" id="CHEBI:58189"/>
        <dbReference type="EC" id="3.6.5.2"/>
    </reaction>
    <physiologicalReaction direction="left-to-right" evidence="3">
        <dbReference type="Rhea" id="RHEA:19670"/>
    </physiologicalReaction>
</comment>
<comment type="cofactor">
    <cofactor evidence="3">
        <name>Mg(2+)</name>
        <dbReference type="ChEBI" id="CHEBI:18420"/>
    </cofactor>
</comment>
<comment type="activity regulation">
    <text evidence="3">Regulated by guanine nucleotide exchange factors (GEFs) including RIN3 and GAPVD1 which promote the exchange of bound GDP for free GTP. Regulated by GTPase activating proteins (GAPs) which increase the GTP hydrolysis activity. Inhibited by GDP dissociation inhibitors (GDIs) which prevent Rab-GDP dissociation.</text>
</comment>
<comment type="subunit">
    <text evidence="1 7 8">Interacts with OCRL. Interacts (in GDP-bound form) with RIN3 and GAPVD1, which function as guanine exchange factors (GEF). Interacts with EGFR (By similarity). Interacts with NGFR. Interacts (in GTP-bound form) with EEA1. Interacts (in GTP-bound form) with APPL2; interaction contributes to or enhances recruitment of APPL2 to the phagosomes; interaction enhances Fc-gamma receptor-mediated phagocytosis through PI3K/Akt signaling in macrophages (PubMed:25568335).</text>
</comment>
<comment type="subcellular location">
    <subcellularLocation>
        <location evidence="3">Early endosome</location>
    </subcellularLocation>
    <subcellularLocation>
        <location evidence="3">Golgi apparatus</location>
        <location evidence="3">trans-Golgi network</location>
    </subcellularLocation>
    <subcellularLocation>
        <location evidence="9">Golgi apparatus</location>
        <location evidence="9">trans-Golgi network membrane</location>
        <topology evidence="9">Lipid-anchor</topology>
        <orientation evidence="9">Cytoplasmic side</orientation>
    </subcellularLocation>
    <subcellularLocation>
        <location evidence="3">Cytoplasmic vesicle</location>
        <location evidence="3">Phagosome</location>
    </subcellularLocation>
    <subcellularLocation>
        <location evidence="9">Cytoplasmic vesicle</location>
        <location evidence="9">Phagosome membrane</location>
        <topology evidence="9">Lipid-anchor</topology>
        <orientation evidence="9">Cytoplasmic side</orientation>
    </subcellularLocation>
    <text evidence="3">Rapidly recruited to phagosomes containing S.aureus or M.tuberculosis.</text>
</comment>
<comment type="tissue specificity">
    <text evidence="6">Detected in brain astrocytes (at protein level).</text>
</comment>
<comment type="domain">
    <text evidence="2">Switch 1, switch 2 and the interswitch regions are characteristic of Rab GTPases and mediate the interactions with Rab downstream effectors. The switch regions undergo conformational changes upon nucleotide binding which drive interaction with specific sets of effector proteins, with most effectors only binding to GTP-bound Rab.</text>
</comment>
<comment type="similarity">
    <text evidence="9">Belongs to the small GTPase superfamily. Rab family.</text>
</comment>
<comment type="sequence caution" evidence="9">
    <conflict type="erroneous initiation">
        <sequence resource="EMBL-CDS" id="AAH13063"/>
    </conflict>
    <text>Truncated N-terminus.</text>
</comment>
<reference key="1">
    <citation type="journal article" date="2005" name="Science">
        <title>The transcriptional landscape of the mammalian genome.</title>
        <authorList>
            <person name="Carninci P."/>
            <person name="Kasukawa T."/>
            <person name="Katayama S."/>
            <person name="Gough J."/>
            <person name="Frith M.C."/>
            <person name="Maeda N."/>
            <person name="Oyama R."/>
            <person name="Ravasi T."/>
            <person name="Lenhard B."/>
            <person name="Wells C."/>
            <person name="Kodzius R."/>
            <person name="Shimokawa K."/>
            <person name="Bajic V.B."/>
            <person name="Brenner S.E."/>
            <person name="Batalov S."/>
            <person name="Forrest A.R."/>
            <person name="Zavolan M."/>
            <person name="Davis M.J."/>
            <person name="Wilming L.G."/>
            <person name="Aidinis V."/>
            <person name="Allen J.E."/>
            <person name="Ambesi-Impiombato A."/>
            <person name="Apweiler R."/>
            <person name="Aturaliya R.N."/>
            <person name="Bailey T.L."/>
            <person name="Bansal M."/>
            <person name="Baxter L."/>
            <person name="Beisel K.W."/>
            <person name="Bersano T."/>
            <person name="Bono H."/>
            <person name="Chalk A.M."/>
            <person name="Chiu K.P."/>
            <person name="Choudhary V."/>
            <person name="Christoffels A."/>
            <person name="Clutterbuck D.R."/>
            <person name="Crowe M.L."/>
            <person name="Dalla E."/>
            <person name="Dalrymple B.P."/>
            <person name="de Bono B."/>
            <person name="Della Gatta G."/>
            <person name="di Bernardo D."/>
            <person name="Down T."/>
            <person name="Engstrom P."/>
            <person name="Fagiolini M."/>
            <person name="Faulkner G."/>
            <person name="Fletcher C.F."/>
            <person name="Fukushima T."/>
            <person name="Furuno M."/>
            <person name="Futaki S."/>
            <person name="Gariboldi M."/>
            <person name="Georgii-Hemming P."/>
            <person name="Gingeras T.R."/>
            <person name="Gojobori T."/>
            <person name="Green R.E."/>
            <person name="Gustincich S."/>
            <person name="Harbers M."/>
            <person name="Hayashi Y."/>
            <person name="Hensch T.K."/>
            <person name="Hirokawa N."/>
            <person name="Hill D."/>
            <person name="Huminiecki L."/>
            <person name="Iacono M."/>
            <person name="Ikeo K."/>
            <person name="Iwama A."/>
            <person name="Ishikawa T."/>
            <person name="Jakt M."/>
            <person name="Kanapin A."/>
            <person name="Katoh M."/>
            <person name="Kawasawa Y."/>
            <person name="Kelso J."/>
            <person name="Kitamura H."/>
            <person name="Kitano H."/>
            <person name="Kollias G."/>
            <person name="Krishnan S.P."/>
            <person name="Kruger A."/>
            <person name="Kummerfeld S.K."/>
            <person name="Kurochkin I.V."/>
            <person name="Lareau L.F."/>
            <person name="Lazarevic D."/>
            <person name="Lipovich L."/>
            <person name="Liu J."/>
            <person name="Liuni S."/>
            <person name="McWilliam S."/>
            <person name="Madan Babu M."/>
            <person name="Madera M."/>
            <person name="Marchionni L."/>
            <person name="Matsuda H."/>
            <person name="Matsuzawa S."/>
            <person name="Miki H."/>
            <person name="Mignone F."/>
            <person name="Miyake S."/>
            <person name="Morris K."/>
            <person name="Mottagui-Tabar S."/>
            <person name="Mulder N."/>
            <person name="Nakano N."/>
            <person name="Nakauchi H."/>
            <person name="Ng P."/>
            <person name="Nilsson R."/>
            <person name="Nishiguchi S."/>
            <person name="Nishikawa S."/>
            <person name="Nori F."/>
            <person name="Ohara O."/>
            <person name="Okazaki Y."/>
            <person name="Orlando V."/>
            <person name="Pang K.C."/>
            <person name="Pavan W.J."/>
            <person name="Pavesi G."/>
            <person name="Pesole G."/>
            <person name="Petrovsky N."/>
            <person name="Piazza S."/>
            <person name="Reed J."/>
            <person name="Reid J.F."/>
            <person name="Ring B.Z."/>
            <person name="Ringwald M."/>
            <person name="Rost B."/>
            <person name="Ruan Y."/>
            <person name="Salzberg S.L."/>
            <person name="Sandelin A."/>
            <person name="Schneider C."/>
            <person name="Schoenbach C."/>
            <person name="Sekiguchi K."/>
            <person name="Semple C.A."/>
            <person name="Seno S."/>
            <person name="Sessa L."/>
            <person name="Sheng Y."/>
            <person name="Shibata Y."/>
            <person name="Shimada H."/>
            <person name="Shimada K."/>
            <person name="Silva D."/>
            <person name="Sinclair B."/>
            <person name="Sperling S."/>
            <person name="Stupka E."/>
            <person name="Sugiura K."/>
            <person name="Sultana R."/>
            <person name="Takenaka Y."/>
            <person name="Taki K."/>
            <person name="Tammoja K."/>
            <person name="Tan S.L."/>
            <person name="Tang S."/>
            <person name="Taylor M.S."/>
            <person name="Tegner J."/>
            <person name="Teichmann S.A."/>
            <person name="Ueda H.R."/>
            <person name="van Nimwegen E."/>
            <person name="Verardo R."/>
            <person name="Wei C.L."/>
            <person name="Yagi K."/>
            <person name="Yamanishi H."/>
            <person name="Zabarovsky E."/>
            <person name="Zhu S."/>
            <person name="Zimmer A."/>
            <person name="Hide W."/>
            <person name="Bult C."/>
            <person name="Grimmond S.M."/>
            <person name="Teasdale R.D."/>
            <person name="Liu E.T."/>
            <person name="Brusic V."/>
            <person name="Quackenbush J."/>
            <person name="Wahlestedt C."/>
            <person name="Mattick J.S."/>
            <person name="Hume D.A."/>
            <person name="Kai C."/>
            <person name="Sasaki D."/>
            <person name="Tomaru Y."/>
            <person name="Fukuda S."/>
            <person name="Kanamori-Katayama M."/>
            <person name="Suzuki M."/>
            <person name="Aoki J."/>
            <person name="Arakawa T."/>
            <person name="Iida J."/>
            <person name="Imamura K."/>
            <person name="Itoh M."/>
            <person name="Kato T."/>
            <person name="Kawaji H."/>
            <person name="Kawagashira N."/>
            <person name="Kawashima T."/>
            <person name="Kojima M."/>
            <person name="Kondo S."/>
            <person name="Konno H."/>
            <person name="Nakano K."/>
            <person name="Ninomiya N."/>
            <person name="Nishio T."/>
            <person name="Okada M."/>
            <person name="Plessy C."/>
            <person name="Shibata K."/>
            <person name="Shiraki T."/>
            <person name="Suzuki S."/>
            <person name="Tagami M."/>
            <person name="Waki K."/>
            <person name="Watahiki A."/>
            <person name="Okamura-Oho Y."/>
            <person name="Suzuki H."/>
            <person name="Kawai J."/>
            <person name="Hayashizaki Y."/>
        </authorList>
    </citation>
    <scope>NUCLEOTIDE SEQUENCE [LARGE SCALE MRNA]</scope>
    <source>
        <strain>C57BL/6J</strain>
        <tissue>Spinal ganglion</tissue>
    </source>
</reference>
<reference key="2">
    <citation type="journal article" date="2004" name="Genome Res.">
        <title>The status, quality, and expansion of the NIH full-length cDNA project: the Mammalian Gene Collection (MGC).</title>
        <authorList>
            <consortium name="The MGC Project Team"/>
        </authorList>
    </citation>
    <scope>NUCLEOTIDE SEQUENCE [LARGE SCALE MRNA]</scope>
    <source>
        <strain>FVB/N</strain>
        <tissue>Mammary tumor</tissue>
    </source>
</reference>
<reference key="3">
    <citation type="journal article" date="2009" name="Exp. Cell Res.">
        <title>Transport of mannose-6-phosphate receptors from the trans-Golgi network to endosomes requires Rab31.</title>
        <authorList>
            <person name="Rodriguez-Gabin A.G."/>
            <person name="Yin X."/>
            <person name="Si Q."/>
            <person name="Larocca J.N."/>
        </authorList>
    </citation>
    <scope>FUNCTION</scope>
</reference>
<reference key="4">
    <citation type="journal article" date="2009" name="Immunity">
        <title>The phagosomal proteome in interferon-gamma-activated macrophages.</title>
        <authorList>
            <person name="Trost M."/>
            <person name="English L."/>
            <person name="Lemieux S."/>
            <person name="Courcelles M."/>
            <person name="Desjardins M."/>
            <person name="Thibault P."/>
        </authorList>
    </citation>
    <scope>PHOSPHORYLATION [LARGE SCALE ANALYSIS] AT SER-36</scope>
    <scope>IDENTIFICATION BY MASS SPECTROMETRY [LARGE SCALE ANALYSIS]</scope>
</reference>
<reference key="5">
    <citation type="journal article" date="2009" name="J. Cell. Physiol.">
        <title>Rab22B is expressed in the CNS astroglia lineage and plays a role in epidermal growth factor receptor trafficking in A431 cells.</title>
        <authorList>
            <person name="Ng E.L."/>
            <person name="Ng J.J."/>
            <person name="Liang F."/>
            <person name="Tang B.L."/>
        </authorList>
    </citation>
    <scope>TISSUE SPECIFICITY</scope>
</reference>
<reference key="6">
    <citation type="journal article" date="2010" name="Cell">
        <title>A tissue-specific atlas of mouse protein phosphorylation and expression.</title>
        <authorList>
            <person name="Huttlin E.L."/>
            <person name="Jedrychowski M.P."/>
            <person name="Elias J.E."/>
            <person name="Goswami T."/>
            <person name="Rad R."/>
            <person name="Beausoleil S.A."/>
            <person name="Villen J."/>
            <person name="Haas W."/>
            <person name="Sowa M.E."/>
            <person name="Gygi S.P."/>
        </authorList>
    </citation>
    <scope>IDENTIFICATION BY MASS SPECTROMETRY [LARGE SCALE ANALYSIS]</scope>
    <source>
        <tissue>Brain</tissue>
        <tissue>Heart</tissue>
        <tissue>Kidney</tissue>
        <tissue>Lung</tissue>
        <tissue>Spleen</tissue>
        <tissue>Testis</tissue>
    </source>
</reference>
<reference key="7">
    <citation type="journal article" date="2012" name="Proc. Natl. Acad. Sci. U.S.A.">
        <title>p75 neurotrophin receptor regulates glucose homeostasis and insulin sensitivity.</title>
        <authorList>
            <person name="Baeza-Raja B."/>
            <person name="Li P."/>
            <person name="Le Moan N."/>
            <person name="Sachs B.D."/>
            <person name="Schachtrup C."/>
            <person name="Davalos D."/>
            <person name="Vagena E."/>
            <person name="Bridges D."/>
            <person name="Kim C."/>
            <person name="Saltiel A.R."/>
            <person name="Olefsky J.M."/>
            <person name="Akassoglou K."/>
        </authorList>
    </citation>
    <scope>FUNCTION</scope>
    <scope>INTERACTION WITH EEA1 AND NGFR</scope>
</reference>
<reference key="8">
    <citation type="journal article" date="2015" name="Mol. Biol. Cell">
        <title>Rab31 and APPL2 enhance FcgammaR-mediated phagocytosis through PI3K/Akt signaling in macrophages.</title>
        <authorList>
            <person name="Yeo J.C."/>
            <person name="Wall A.A."/>
            <person name="Luo L."/>
            <person name="Stow J.L."/>
        </authorList>
    </citation>
    <scope>INTERACTION WITH APPL2</scope>
</reference>
<evidence type="ECO:0000250" key="1"/>
<evidence type="ECO:0000250" key="2">
    <source>
        <dbReference type="UniProtKB" id="P20339"/>
    </source>
</evidence>
<evidence type="ECO:0000250" key="3">
    <source>
        <dbReference type="UniProtKB" id="Q13636"/>
    </source>
</evidence>
<evidence type="ECO:0000256" key="4">
    <source>
        <dbReference type="SAM" id="MobiDB-lite"/>
    </source>
</evidence>
<evidence type="ECO:0000269" key="5">
    <source>
    </source>
</evidence>
<evidence type="ECO:0000269" key="6">
    <source>
    </source>
</evidence>
<evidence type="ECO:0000269" key="7">
    <source>
    </source>
</evidence>
<evidence type="ECO:0000269" key="8">
    <source>
    </source>
</evidence>
<evidence type="ECO:0000305" key="9"/>
<evidence type="ECO:0000312" key="10">
    <source>
        <dbReference type="MGI" id="MGI:1914603"/>
    </source>
</evidence>
<evidence type="ECO:0007744" key="11">
    <source>
    </source>
</evidence>
<feature type="chain" id="PRO_0000121233" description="Ras-related protein Rab-31">
    <location>
        <begin position="1"/>
        <end position="195"/>
    </location>
</feature>
<feature type="region of interest" description="Disordered" evidence="4">
    <location>
        <begin position="168"/>
        <end position="195"/>
    </location>
</feature>
<feature type="short sequence motif" description="Switch 1" evidence="2">
    <location>
        <begin position="30"/>
        <end position="42"/>
    </location>
</feature>
<feature type="short sequence motif" description="Switch 2" evidence="2">
    <location>
        <begin position="63"/>
        <end position="79"/>
    </location>
</feature>
<feature type="compositionally biased region" description="Polar residues" evidence="4">
    <location>
        <begin position="184"/>
        <end position="195"/>
    </location>
</feature>
<feature type="binding site" evidence="3">
    <location>
        <position position="16"/>
    </location>
    <ligand>
        <name>GTP</name>
        <dbReference type="ChEBI" id="CHEBI:37565"/>
    </ligand>
</feature>
<feature type="binding site" evidence="3">
    <location>
        <position position="18"/>
    </location>
    <ligand>
        <name>GTP</name>
        <dbReference type="ChEBI" id="CHEBI:37565"/>
    </ligand>
</feature>
<feature type="binding site" evidence="3">
    <location>
        <position position="19"/>
    </location>
    <ligand>
        <name>GTP</name>
        <dbReference type="ChEBI" id="CHEBI:37565"/>
    </ligand>
</feature>
<feature type="binding site" evidence="3">
    <location>
        <position position="20"/>
    </location>
    <ligand>
        <name>GTP</name>
        <dbReference type="ChEBI" id="CHEBI:37565"/>
    </ligand>
</feature>
<feature type="binding site" evidence="3">
    <location>
        <position position="20"/>
    </location>
    <ligand>
        <name>Mg(2+)</name>
        <dbReference type="ChEBI" id="CHEBI:18420"/>
    </ligand>
</feature>
<feature type="binding site" evidence="3">
    <location>
        <position position="21"/>
    </location>
    <ligand>
        <name>GTP</name>
        <dbReference type="ChEBI" id="CHEBI:37565"/>
    </ligand>
</feature>
<feature type="binding site" evidence="3">
    <location>
        <position position="32"/>
    </location>
    <ligand>
        <name>GTP</name>
        <dbReference type="ChEBI" id="CHEBI:37565"/>
    </ligand>
</feature>
<feature type="binding site" evidence="3">
    <location>
        <position position="33"/>
    </location>
    <ligand>
        <name>GTP</name>
        <dbReference type="ChEBI" id="CHEBI:37565"/>
    </ligand>
</feature>
<feature type="binding site" evidence="3">
    <location>
        <position position="38"/>
    </location>
    <ligand>
        <name>GTP</name>
        <dbReference type="ChEBI" id="CHEBI:37565"/>
    </ligand>
</feature>
<feature type="binding site" evidence="3">
    <location>
        <position position="38"/>
    </location>
    <ligand>
        <name>Mg(2+)</name>
        <dbReference type="ChEBI" id="CHEBI:18420"/>
    </ligand>
</feature>
<feature type="binding site" evidence="3">
    <location>
        <position position="64"/>
    </location>
    <ligand>
        <name>GTP</name>
        <dbReference type="ChEBI" id="CHEBI:37565"/>
    </ligand>
</feature>
<feature type="binding site" evidence="3">
    <location>
        <position position="119"/>
    </location>
    <ligand>
        <name>GTP</name>
        <dbReference type="ChEBI" id="CHEBI:37565"/>
    </ligand>
</feature>
<feature type="binding site" evidence="3">
    <location>
        <position position="122"/>
    </location>
    <ligand>
        <name>GTP</name>
        <dbReference type="ChEBI" id="CHEBI:37565"/>
    </ligand>
</feature>
<feature type="binding site" evidence="3">
    <location>
        <position position="150"/>
    </location>
    <ligand>
        <name>GTP</name>
        <dbReference type="ChEBI" id="CHEBI:37565"/>
    </ligand>
</feature>
<feature type="binding site" evidence="3">
    <location>
        <position position="151"/>
    </location>
    <ligand>
        <name>GTP</name>
        <dbReference type="ChEBI" id="CHEBI:37565"/>
    </ligand>
</feature>
<feature type="modified residue" description="Phosphoserine" evidence="11">
    <location>
        <position position="36"/>
    </location>
</feature>
<feature type="lipid moiety-binding region" description="S-geranylgeranyl cysteine" evidence="1">
    <location>
        <position position="194"/>
    </location>
</feature>
<feature type="lipid moiety-binding region" description="S-geranylgeranyl cysteine" evidence="1">
    <location>
        <position position="195"/>
    </location>
</feature>
<feature type="sequence conflict" description="In Ref. 1; BAC34585." evidence="9" ref="1">
    <original>C</original>
    <variation>W</variation>
    <location>
        <position position="50"/>
    </location>
</feature>
<proteinExistence type="evidence at protein level"/>
<protein>
    <recommendedName>
        <fullName>Ras-related protein Rab-31</fullName>
        <ecNumber evidence="3">3.6.5.2</ecNumber>
    </recommendedName>
</protein>
<gene>
    <name evidence="10" type="primary">Rab31</name>
</gene>
<dbReference type="EC" id="3.6.5.2" evidence="3"/>
<dbReference type="EMBL" id="AK051270">
    <property type="protein sequence ID" value="BAC34585.1"/>
    <property type="molecule type" value="mRNA"/>
</dbReference>
<dbReference type="EMBL" id="BC013063">
    <property type="protein sequence ID" value="AAH13063.1"/>
    <property type="status" value="ALT_INIT"/>
    <property type="molecule type" value="mRNA"/>
</dbReference>
<dbReference type="CCDS" id="CCDS50166.1"/>
<dbReference type="RefSeq" id="NP_598446.2">
    <property type="nucleotide sequence ID" value="NM_133685.2"/>
</dbReference>
<dbReference type="SMR" id="Q921E2"/>
<dbReference type="BioGRID" id="223081">
    <property type="interactions" value="1"/>
</dbReference>
<dbReference type="FunCoup" id="Q921E2">
    <property type="interactions" value="611"/>
</dbReference>
<dbReference type="IntAct" id="Q921E2">
    <property type="interactions" value="10"/>
</dbReference>
<dbReference type="STRING" id="10090.ENSMUSP00000068195"/>
<dbReference type="GlyGen" id="Q921E2">
    <property type="glycosylation" value="1 site"/>
</dbReference>
<dbReference type="iPTMnet" id="Q921E2"/>
<dbReference type="PhosphoSitePlus" id="Q921E2"/>
<dbReference type="SwissPalm" id="Q921E2"/>
<dbReference type="PaxDb" id="10090-ENSMUSP00000068195"/>
<dbReference type="ProteomicsDB" id="300377"/>
<dbReference type="Pumba" id="Q921E2"/>
<dbReference type="DNASU" id="106572"/>
<dbReference type="Ensembl" id="ENSMUST00000070673.9">
    <property type="protein sequence ID" value="ENSMUSP00000068195.8"/>
    <property type="gene ID" value="ENSMUSG00000056515.10"/>
</dbReference>
<dbReference type="GeneID" id="106572"/>
<dbReference type="KEGG" id="mmu:106572"/>
<dbReference type="AGR" id="MGI:1914603"/>
<dbReference type="CTD" id="11031"/>
<dbReference type="MGI" id="MGI:1914603">
    <property type="gene designation" value="Rab31"/>
</dbReference>
<dbReference type="eggNOG" id="KOG0092">
    <property type="taxonomic scope" value="Eukaryota"/>
</dbReference>
<dbReference type="GeneTree" id="ENSGT00940000155702"/>
<dbReference type="InParanoid" id="Q921E2"/>
<dbReference type="OMA" id="KQDTFHT"/>
<dbReference type="OrthoDB" id="63533at2759"/>
<dbReference type="PhylomeDB" id="Q921E2"/>
<dbReference type="Reactome" id="R-MMU-6798695">
    <property type="pathway name" value="Neutrophil degranulation"/>
</dbReference>
<dbReference type="Reactome" id="R-MMU-8873719">
    <property type="pathway name" value="RAB geranylgeranylation"/>
</dbReference>
<dbReference type="Reactome" id="R-MMU-8876198">
    <property type="pathway name" value="RAB GEFs exchange GTP for GDP on RABs"/>
</dbReference>
<dbReference type="BioGRID-ORCS" id="106572">
    <property type="hits" value="0 hits in 78 CRISPR screens"/>
</dbReference>
<dbReference type="ChiTaRS" id="Rab31">
    <property type="organism name" value="mouse"/>
</dbReference>
<dbReference type="PRO" id="PR:Q921E2"/>
<dbReference type="Proteomes" id="UP000000589">
    <property type="component" value="Chromosome 17"/>
</dbReference>
<dbReference type="RNAct" id="Q921E2">
    <property type="molecule type" value="protein"/>
</dbReference>
<dbReference type="GO" id="GO:0005737">
    <property type="term" value="C:cytoplasm"/>
    <property type="evidence" value="ECO:0000314"/>
    <property type="project" value="UniProtKB"/>
</dbReference>
<dbReference type="GO" id="GO:0005769">
    <property type="term" value="C:early endosome"/>
    <property type="evidence" value="ECO:0000250"/>
    <property type="project" value="UniProtKB"/>
</dbReference>
<dbReference type="GO" id="GO:0036186">
    <property type="term" value="C:early phagosome membrane"/>
    <property type="evidence" value="ECO:0000314"/>
    <property type="project" value="UniProtKB"/>
</dbReference>
<dbReference type="GO" id="GO:0005770">
    <property type="term" value="C:late endosome"/>
    <property type="evidence" value="ECO:0007669"/>
    <property type="project" value="Ensembl"/>
</dbReference>
<dbReference type="GO" id="GO:0001891">
    <property type="term" value="C:phagocytic cup"/>
    <property type="evidence" value="ECO:0000314"/>
    <property type="project" value="UniProtKB"/>
</dbReference>
<dbReference type="GO" id="GO:0045335">
    <property type="term" value="C:phagocytic vesicle"/>
    <property type="evidence" value="ECO:0000250"/>
    <property type="project" value="UniProtKB"/>
</dbReference>
<dbReference type="GO" id="GO:0032588">
    <property type="term" value="C:trans-Golgi network membrane"/>
    <property type="evidence" value="ECO:0000250"/>
    <property type="project" value="UniProtKB"/>
</dbReference>
<dbReference type="GO" id="GO:0019003">
    <property type="term" value="F:GDP binding"/>
    <property type="evidence" value="ECO:0000250"/>
    <property type="project" value="UniProtKB"/>
</dbReference>
<dbReference type="GO" id="GO:0005525">
    <property type="term" value="F:GTP binding"/>
    <property type="evidence" value="ECO:0000250"/>
    <property type="project" value="UniProtKB"/>
</dbReference>
<dbReference type="GO" id="GO:0003924">
    <property type="term" value="F:GTPase activity"/>
    <property type="evidence" value="ECO:0000250"/>
    <property type="project" value="UniProtKB"/>
</dbReference>
<dbReference type="GO" id="GO:0032869">
    <property type="term" value="P:cellular response to insulin stimulus"/>
    <property type="evidence" value="ECO:0000250"/>
    <property type="project" value="UniProtKB"/>
</dbReference>
<dbReference type="GO" id="GO:0043001">
    <property type="term" value="P:Golgi to plasma membrane protein transport"/>
    <property type="evidence" value="ECO:0000250"/>
    <property type="project" value="UniProtKB"/>
</dbReference>
<dbReference type="GO" id="GO:0090382">
    <property type="term" value="P:phagosome maturation"/>
    <property type="evidence" value="ECO:0000250"/>
    <property type="project" value="UniProtKB"/>
</dbReference>
<dbReference type="GO" id="GO:0060100">
    <property type="term" value="P:positive regulation of phagocytosis, engulfment"/>
    <property type="evidence" value="ECO:0000315"/>
    <property type="project" value="UniProtKB"/>
</dbReference>
<dbReference type="GO" id="GO:0031623">
    <property type="term" value="P:receptor internalization"/>
    <property type="evidence" value="ECO:0000250"/>
    <property type="project" value="UniProtKB"/>
</dbReference>
<dbReference type="GO" id="GO:0045055">
    <property type="term" value="P:regulated exocytosis"/>
    <property type="evidence" value="ECO:0000250"/>
    <property type="project" value="UniProtKB"/>
</dbReference>
<dbReference type="CDD" id="cd01860">
    <property type="entry name" value="Rab5_related"/>
    <property type="match status" value="1"/>
</dbReference>
<dbReference type="FunFam" id="3.40.50.300:FF:000346">
    <property type="entry name" value="RAB31, member RAS oncogene family"/>
    <property type="match status" value="1"/>
</dbReference>
<dbReference type="Gene3D" id="3.40.50.300">
    <property type="entry name" value="P-loop containing nucleotide triphosphate hydrolases"/>
    <property type="match status" value="1"/>
</dbReference>
<dbReference type="InterPro" id="IPR027417">
    <property type="entry name" value="P-loop_NTPase"/>
</dbReference>
<dbReference type="InterPro" id="IPR005225">
    <property type="entry name" value="Small_GTP-bd"/>
</dbReference>
<dbReference type="InterPro" id="IPR001806">
    <property type="entry name" value="Small_GTPase"/>
</dbReference>
<dbReference type="NCBIfam" id="TIGR00231">
    <property type="entry name" value="small_GTP"/>
    <property type="match status" value="1"/>
</dbReference>
<dbReference type="PANTHER" id="PTHR47978">
    <property type="match status" value="1"/>
</dbReference>
<dbReference type="Pfam" id="PF00071">
    <property type="entry name" value="Ras"/>
    <property type="match status" value="1"/>
</dbReference>
<dbReference type="PRINTS" id="PR00449">
    <property type="entry name" value="RASTRNSFRMNG"/>
</dbReference>
<dbReference type="SMART" id="SM00175">
    <property type="entry name" value="RAB"/>
    <property type="match status" value="1"/>
</dbReference>
<dbReference type="SMART" id="SM00176">
    <property type="entry name" value="RAN"/>
    <property type="match status" value="1"/>
</dbReference>
<dbReference type="SMART" id="SM00173">
    <property type="entry name" value="RAS"/>
    <property type="match status" value="1"/>
</dbReference>
<dbReference type="SMART" id="SM00174">
    <property type="entry name" value="RHO"/>
    <property type="match status" value="1"/>
</dbReference>
<dbReference type="SUPFAM" id="SSF52540">
    <property type="entry name" value="P-loop containing nucleoside triphosphate hydrolases"/>
    <property type="match status" value="1"/>
</dbReference>
<dbReference type="PROSITE" id="PS51419">
    <property type="entry name" value="RAB"/>
    <property type="match status" value="1"/>
</dbReference>
<name>RAB31_MOUSE</name>